<feature type="chain" id="PRO_0000257547" description="Putative pre-16S rRNA nuclease">
    <location>
        <begin position="1"/>
        <end position="160"/>
    </location>
</feature>
<sequence>MSVVSIEELEKARAYGRPLAGLDLGTKTIGVAISDLGLSFATPRAYLPRKKFQEDAKALLHLLSRENAGGVIVGLPINMDGSEGPRAQSTRAFVRNLQPLTKLPFAFWDERLSTVAAERALIEMDVSRAKRAQRIDSAAAAFILQGALDRLQALRADPGG</sequence>
<gene>
    <name type="ordered locus">Meso_1361</name>
</gene>
<protein>
    <recommendedName>
        <fullName evidence="1">Putative pre-16S rRNA nuclease</fullName>
        <ecNumber evidence="1">3.1.-.-</ecNumber>
    </recommendedName>
</protein>
<reference key="1">
    <citation type="submission" date="2006-06" db="EMBL/GenBank/DDBJ databases">
        <title>Complete sequence of chromosome of Mesorhizobium sp. BNC1.</title>
        <authorList>
            <consortium name="US DOE Joint Genome Institute"/>
            <person name="Copeland A."/>
            <person name="Lucas S."/>
            <person name="Lapidus A."/>
            <person name="Barry K."/>
            <person name="Detter J.C."/>
            <person name="Glavina del Rio T."/>
            <person name="Hammon N."/>
            <person name="Israni S."/>
            <person name="Dalin E."/>
            <person name="Tice H."/>
            <person name="Pitluck S."/>
            <person name="Chertkov O."/>
            <person name="Brettin T."/>
            <person name="Bruce D."/>
            <person name="Han C."/>
            <person name="Tapia R."/>
            <person name="Gilna P."/>
            <person name="Schmutz J."/>
            <person name="Larimer F."/>
            <person name="Land M."/>
            <person name="Hauser L."/>
            <person name="Kyrpides N."/>
            <person name="Mikhailova N."/>
            <person name="Richardson P."/>
        </authorList>
    </citation>
    <scope>NUCLEOTIDE SEQUENCE [LARGE SCALE GENOMIC DNA]</scope>
    <source>
        <strain>BNC1</strain>
    </source>
</reference>
<comment type="function">
    <text evidence="1">Could be a nuclease involved in processing of the 5'-end of pre-16S rRNA.</text>
</comment>
<comment type="subcellular location">
    <subcellularLocation>
        <location evidence="1">Cytoplasm</location>
    </subcellularLocation>
</comment>
<comment type="similarity">
    <text evidence="1">Belongs to the YqgF nuclease family.</text>
</comment>
<dbReference type="EC" id="3.1.-.-" evidence="1"/>
<dbReference type="EMBL" id="CP000390">
    <property type="protein sequence ID" value="ABG62757.1"/>
    <property type="molecule type" value="Genomic_DNA"/>
</dbReference>
<dbReference type="SMR" id="Q11IL8"/>
<dbReference type="STRING" id="266779.Meso_1361"/>
<dbReference type="KEGG" id="mes:Meso_1361"/>
<dbReference type="eggNOG" id="COG0816">
    <property type="taxonomic scope" value="Bacteria"/>
</dbReference>
<dbReference type="HOGENOM" id="CLU_098240_1_1_5"/>
<dbReference type="OrthoDB" id="9796140at2"/>
<dbReference type="GO" id="GO:0005829">
    <property type="term" value="C:cytosol"/>
    <property type="evidence" value="ECO:0007669"/>
    <property type="project" value="TreeGrafter"/>
</dbReference>
<dbReference type="GO" id="GO:0004518">
    <property type="term" value="F:nuclease activity"/>
    <property type="evidence" value="ECO:0007669"/>
    <property type="project" value="UniProtKB-KW"/>
</dbReference>
<dbReference type="GO" id="GO:0000967">
    <property type="term" value="P:rRNA 5'-end processing"/>
    <property type="evidence" value="ECO:0007669"/>
    <property type="project" value="UniProtKB-UniRule"/>
</dbReference>
<dbReference type="CDD" id="cd16964">
    <property type="entry name" value="YqgF"/>
    <property type="match status" value="1"/>
</dbReference>
<dbReference type="Gene3D" id="3.30.420.140">
    <property type="entry name" value="YqgF/RNase H-like domain"/>
    <property type="match status" value="1"/>
</dbReference>
<dbReference type="HAMAP" id="MF_00651">
    <property type="entry name" value="Nuclease_YqgF"/>
    <property type="match status" value="1"/>
</dbReference>
<dbReference type="InterPro" id="IPR012337">
    <property type="entry name" value="RNaseH-like_sf"/>
</dbReference>
<dbReference type="InterPro" id="IPR005227">
    <property type="entry name" value="YqgF"/>
</dbReference>
<dbReference type="InterPro" id="IPR006641">
    <property type="entry name" value="YqgF/RNaseH-like_dom"/>
</dbReference>
<dbReference type="InterPro" id="IPR037027">
    <property type="entry name" value="YqgF/RNaseH-like_dom_sf"/>
</dbReference>
<dbReference type="NCBIfam" id="TIGR00250">
    <property type="entry name" value="RNAse_H_YqgF"/>
    <property type="match status" value="1"/>
</dbReference>
<dbReference type="PANTHER" id="PTHR33317">
    <property type="entry name" value="POLYNUCLEOTIDYL TRANSFERASE, RIBONUCLEASE H-LIKE SUPERFAMILY PROTEIN"/>
    <property type="match status" value="1"/>
</dbReference>
<dbReference type="PANTHER" id="PTHR33317:SF4">
    <property type="entry name" value="POLYNUCLEOTIDYL TRANSFERASE, RIBONUCLEASE H-LIKE SUPERFAMILY PROTEIN"/>
    <property type="match status" value="1"/>
</dbReference>
<dbReference type="Pfam" id="PF03652">
    <property type="entry name" value="RuvX"/>
    <property type="match status" value="1"/>
</dbReference>
<dbReference type="SMART" id="SM00732">
    <property type="entry name" value="YqgFc"/>
    <property type="match status" value="1"/>
</dbReference>
<dbReference type="SUPFAM" id="SSF53098">
    <property type="entry name" value="Ribonuclease H-like"/>
    <property type="match status" value="1"/>
</dbReference>
<evidence type="ECO:0000255" key="1">
    <source>
        <dbReference type="HAMAP-Rule" id="MF_00651"/>
    </source>
</evidence>
<accession>Q11IL8</accession>
<proteinExistence type="inferred from homology"/>
<name>YQGF_CHESB</name>
<organism>
    <name type="scientific">Chelativorans sp. (strain BNC1)</name>
    <dbReference type="NCBI Taxonomy" id="266779"/>
    <lineage>
        <taxon>Bacteria</taxon>
        <taxon>Pseudomonadati</taxon>
        <taxon>Pseudomonadota</taxon>
        <taxon>Alphaproteobacteria</taxon>
        <taxon>Hyphomicrobiales</taxon>
        <taxon>Phyllobacteriaceae</taxon>
        <taxon>Chelativorans</taxon>
    </lineage>
</organism>
<keyword id="KW-0963">Cytoplasm</keyword>
<keyword id="KW-0378">Hydrolase</keyword>
<keyword id="KW-0540">Nuclease</keyword>
<keyword id="KW-0690">Ribosome biogenesis</keyword>